<feature type="chain" id="PRO_0000115458" description="Small ribosomal subunit protein uS15">
    <location>
        <begin position="1"/>
        <end position="91"/>
    </location>
</feature>
<dbReference type="EMBL" id="CR628337">
    <property type="protein sequence ID" value="CAH16927.1"/>
    <property type="molecule type" value="Genomic_DNA"/>
</dbReference>
<dbReference type="RefSeq" id="WP_010948459.1">
    <property type="nucleotide sequence ID" value="NC_006369.1"/>
</dbReference>
<dbReference type="SMR" id="Q5WT39"/>
<dbReference type="GeneID" id="57036767"/>
<dbReference type="KEGG" id="lpf:lpl2686"/>
<dbReference type="LegioList" id="lpl2686"/>
<dbReference type="HOGENOM" id="CLU_148518_0_0_6"/>
<dbReference type="Proteomes" id="UP000002517">
    <property type="component" value="Chromosome"/>
</dbReference>
<dbReference type="GO" id="GO:0022627">
    <property type="term" value="C:cytosolic small ribosomal subunit"/>
    <property type="evidence" value="ECO:0007669"/>
    <property type="project" value="TreeGrafter"/>
</dbReference>
<dbReference type="GO" id="GO:0019843">
    <property type="term" value="F:rRNA binding"/>
    <property type="evidence" value="ECO:0007669"/>
    <property type="project" value="UniProtKB-UniRule"/>
</dbReference>
<dbReference type="GO" id="GO:0003735">
    <property type="term" value="F:structural constituent of ribosome"/>
    <property type="evidence" value="ECO:0007669"/>
    <property type="project" value="InterPro"/>
</dbReference>
<dbReference type="GO" id="GO:0006412">
    <property type="term" value="P:translation"/>
    <property type="evidence" value="ECO:0007669"/>
    <property type="project" value="UniProtKB-UniRule"/>
</dbReference>
<dbReference type="CDD" id="cd00353">
    <property type="entry name" value="Ribosomal_S15p_S13e"/>
    <property type="match status" value="1"/>
</dbReference>
<dbReference type="FunFam" id="1.10.287.10:FF:000002">
    <property type="entry name" value="30S ribosomal protein S15"/>
    <property type="match status" value="1"/>
</dbReference>
<dbReference type="Gene3D" id="6.10.250.3130">
    <property type="match status" value="1"/>
</dbReference>
<dbReference type="Gene3D" id="1.10.287.10">
    <property type="entry name" value="S15/NS1, RNA-binding"/>
    <property type="match status" value="1"/>
</dbReference>
<dbReference type="HAMAP" id="MF_01343_B">
    <property type="entry name" value="Ribosomal_uS15_B"/>
    <property type="match status" value="1"/>
</dbReference>
<dbReference type="InterPro" id="IPR000589">
    <property type="entry name" value="Ribosomal_uS15"/>
</dbReference>
<dbReference type="InterPro" id="IPR005290">
    <property type="entry name" value="Ribosomal_uS15_bac-type"/>
</dbReference>
<dbReference type="InterPro" id="IPR009068">
    <property type="entry name" value="uS15_NS1_RNA-bd_sf"/>
</dbReference>
<dbReference type="NCBIfam" id="TIGR00952">
    <property type="entry name" value="S15_bact"/>
    <property type="match status" value="1"/>
</dbReference>
<dbReference type="PANTHER" id="PTHR23321">
    <property type="entry name" value="RIBOSOMAL PROTEIN S15, BACTERIAL AND ORGANELLAR"/>
    <property type="match status" value="1"/>
</dbReference>
<dbReference type="PANTHER" id="PTHR23321:SF26">
    <property type="entry name" value="SMALL RIBOSOMAL SUBUNIT PROTEIN US15M"/>
    <property type="match status" value="1"/>
</dbReference>
<dbReference type="Pfam" id="PF00312">
    <property type="entry name" value="Ribosomal_S15"/>
    <property type="match status" value="1"/>
</dbReference>
<dbReference type="SMART" id="SM01387">
    <property type="entry name" value="Ribosomal_S15"/>
    <property type="match status" value="1"/>
</dbReference>
<dbReference type="SUPFAM" id="SSF47060">
    <property type="entry name" value="S15/NS1 RNA-binding domain"/>
    <property type="match status" value="1"/>
</dbReference>
<dbReference type="PROSITE" id="PS00362">
    <property type="entry name" value="RIBOSOMAL_S15"/>
    <property type="match status" value="1"/>
</dbReference>
<reference key="1">
    <citation type="journal article" date="2004" name="Nat. Genet.">
        <title>Evidence in the Legionella pneumophila genome for exploitation of host cell functions and high genome plasticity.</title>
        <authorList>
            <person name="Cazalet C."/>
            <person name="Rusniok C."/>
            <person name="Brueggemann H."/>
            <person name="Zidane N."/>
            <person name="Magnier A."/>
            <person name="Ma L."/>
            <person name="Tichit M."/>
            <person name="Jarraud S."/>
            <person name="Bouchier C."/>
            <person name="Vandenesch F."/>
            <person name="Kunst F."/>
            <person name="Etienne J."/>
            <person name="Glaser P."/>
            <person name="Buchrieser C."/>
        </authorList>
    </citation>
    <scope>NUCLEOTIDE SEQUENCE [LARGE SCALE GENOMIC DNA]</scope>
    <source>
        <strain>Lens</strain>
    </source>
</reference>
<organism>
    <name type="scientific">Legionella pneumophila (strain Lens)</name>
    <dbReference type="NCBI Taxonomy" id="297245"/>
    <lineage>
        <taxon>Bacteria</taxon>
        <taxon>Pseudomonadati</taxon>
        <taxon>Pseudomonadota</taxon>
        <taxon>Gammaproteobacteria</taxon>
        <taxon>Legionellales</taxon>
        <taxon>Legionellaceae</taxon>
        <taxon>Legionella</taxon>
    </lineage>
</organism>
<accession>Q5WT39</accession>
<evidence type="ECO:0000255" key="1">
    <source>
        <dbReference type="HAMAP-Rule" id="MF_01343"/>
    </source>
</evidence>
<evidence type="ECO:0000305" key="2"/>
<sequence>MSLNSAEKAEIINEYKRGDKDTGSPEVQVSLITSRIKYLTDHFKENKKDFHSRRGLQELVNKRRKLLKYLKRNDQDRYQTLIQNLGLRDSY</sequence>
<keyword id="KW-0687">Ribonucleoprotein</keyword>
<keyword id="KW-0689">Ribosomal protein</keyword>
<keyword id="KW-0694">RNA-binding</keyword>
<keyword id="KW-0699">rRNA-binding</keyword>
<protein>
    <recommendedName>
        <fullName evidence="1">Small ribosomal subunit protein uS15</fullName>
    </recommendedName>
    <alternativeName>
        <fullName evidence="2">30S ribosomal protein S15</fullName>
    </alternativeName>
</protein>
<name>RS15_LEGPL</name>
<gene>
    <name evidence="1" type="primary">rpsO</name>
    <name type="ordered locus">lpl2686</name>
</gene>
<proteinExistence type="inferred from homology"/>
<comment type="function">
    <text evidence="1">One of the primary rRNA binding proteins, it binds directly to 16S rRNA where it helps nucleate assembly of the platform of the 30S subunit by binding and bridging several RNA helices of the 16S rRNA.</text>
</comment>
<comment type="function">
    <text evidence="1">Forms an intersubunit bridge (bridge B4) with the 23S rRNA of the 50S subunit in the ribosome.</text>
</comment>
<comment type="subunit">
    <text evidence="1">Part of the 30S ribosomal subunit. Forms a bridge to the 50S subunit in the 70S ribosome, contacting the 23S rRNA.</text>
</comment>
<comment type="similarity">
    <text evidence="1">Belongs to the universal ribosomal protein uS15 family.</text>
</comment>